<protein>
    <recommendedName>
        <fullName evidence="3">Small ribosomal subunit protein uS11z</fullName>
    </recommendedName>
    <alternativeName>
        <fullName>40S ribosomal protein S14-1</fullName>
    </alternativeName>
</protein>
<keyword id="KW-0963">Cytoplasm</keyword>
<keyword id="KW-0597">Phosphoprotein</keyword>
<keyword id="KW-1185">Reference proteome</keyword>
<keyword id="KW-0687">Ribonucleoprotein</keyword>
<keyword id="KW-0689">Ribosomal protein</keyword>
<reference key="1">
    <citation type="journal article" date="1999" name="Nature">
        <title>Sequence and analysis of chromosome 2 of the plant Arabidopsis thaliana.</title>
        <authorList>
            <person name="Lin X."/>
            <person name="Kaul S."/>
            <person name="Rounsley S.D."/>
            <person name="Shea T.P."/>
            <person name="Benito M.-I."/>
            <person name="Town C.D."/>
            <person name="Fujii C.Y."/>
            <person name="Mason T.M."/>
            <person name="Bowman C.L."/>
            <person name="Barnstead M.E."/>
            <person name="Feldblyum T.V."/>
            <person name="Buell C.R."/>
            <person name="Ketchum K.A."/>
            <person name="Lee J.J."/>
            <person name="Ronning C.M."/>
            <person name="Koo H.L."/>
            <person name="Moffat K.S."/>
            <person name="Cronin L.A."/>
            <person name="Shen M."/>
            <person name="Pai G."/>
            <person name="Van Aken S."/>
            <person name="Umayam L."/>
            <person name="Tallon L.J."/>
            <person name="Gill J.E."/>
            <person name="Adams M.D."/>
            <person name="Carrera A.J."/>
            <person name="Creasy T.H."/>
            <person name="Goodman H.M."/>
            <person name="Somerville C.R."/>
            <person name="Copenhaver G.P."/>
            <person name="Preuss D."/>
            <person name="Nierman W.C."/>
            <person name="White O."/>
            <person name="Eisen J.A."/>
            <person name="Salzberg S.L."/>
            <person name="Fraser C.M."/>
            <person name="Venter J.C."/>
        </authorList>
    </citation>
    <scope>NUCLEOTIDE SEQUENCE [LARGE SCALE GENOMIC DNA]</scope>
    <source>
        <strain>cv. Columbia</strain>
    </source>
</reference>
<reference key="2">
    <citation type="journal article" date="2017" name="Plant J.">
        <title>Araport11: a complete reannotation of the Arabidopsis thaliana reference genome.</title>
        <authorList>
            <person name="Cheng C.Y."/>
            <person name="Krishnakumar V."/>
            <person name="Chan A.P."/>
            <person name="Thibaud-Nissen F."/>
            <person name="Schobel S."/>
            <person name="Town C.D."/>
        </authorList>
    </citation>
    <scope>GENOME REANNOTATION</scope>
    <source>
        <strain>cv. Columbia</strain>
    </source>
</reference>
<reference key="3">
    <citation type="submission" date="2002-03" db="EMBL/GenBank/DDBJ databases">
        <title>Full-length cDNA from Arabidopsis thaliana.</title>
        <authorList>
            <person name="Brover V.V."/>
            <person name="Troukhan M.E."/>
            <person name="Alexandrov N.A."/>
            <person name="Lu Y.-P."/>
            <person name="Flavell R.B."/>
            <person name="Feldmann K.A."/>
        </authorList>
    </citation>
    <scope>NUCLEOTIDE SEQUENCE [LARGE SCALE MRNA]</scope>
</reference>
<reference key="4">
    <citation type="journal article" date="2001" name="Plant Physiol.">
        <title>The organization of cytoplasmic ribosomal protein genes in the Arabidopsis genome.</title>
        <authorList>
            <person name="Barakat A."/>
            <person name="Szick-Miranda K."/>
            <person name="Chang I.-F."/>
            <person name="Guyot R."/>
            <person name="Blanc G."/>
            <person name="Cooke R."/>
            <person name="Delseny M."/>
            <person name="Bailey-Serres J."/>
        </authorList>
    </citation>
    <scope>GENE FAMILY ORGANIZATION</scope>
    <scope>NOMENCLATURE</scope>
</reference>
<reference key="5">
    <citation type="journal article" date="2012" name="Plant Physiol. Biochem.">
        <title>Identification of a novel nuclear-localized adenylate kinase 6 from Arabidopsis thaliana as an essential stem growth factor.</title>
        <authorList>
            <person name="Feng X."/>
            <person name="Yang R."/>
            <person name="Zheng X."/>
            <person name="Zhang F."/>
        </authorList>
    </citation>
    <scope>INTERACTION WITH AAK6</scope>
</reference>
<reference key="6">
    <citation type="journal article" date="2023" name="Plant Cell">
        <title>An updated nomenclature for plant ribosomal protein genes.</title>
        <authorList>
            <person name="Scarpin M.R."/>
            <person name="Busche M."/>
            <person name="Martinez R.E."/>
            <person name="Harper L.C."/>
            <person name="Reiser L."/>
            <person name="Szakonyi D."/>
            <person name="Merchante C."/>
            <person name="Lan T."/>
            <person name="Xiong W."/>
            <person name="Mo B."/>
            <person name="Tang G."/>
            <person name="Chen X."/>
            <person name="Bailey-Serres J."/>
            <person name="Browning K.S."/>
            <person name="Brunkard J.O."/>
        </authorList>
    </citation>
    <scope>NOMENCLATURE</scope>
</reference>
<accession>Q9SIH0</accession>
<dbReference type="EMBL" id="AC007135">
    <property type="protein sequence ID" value="AAD26971.1"/>
    <property type="molecule type" value="Genomic_DNA"/>
</dbReference>
<dbReference type="EMBL" id="CP002685">
    <property type="protein sequence ID" value="AEC09211.1"/>
    <property type="molecule type" value="Genomic_DNA"/>
</dbReference>
<dbReference type="EMBL" id="AY088120">
    <property type="protein sequence ID" value="AAM65665.1"/>
    <property type="molecule type" value="mRNA"/>
</dbReference>
<dbReference type="PIR" id="D84777">
    <property type="entry name" value="D84777"/>
</dbReference>
<dbReference type="RefSeq" id="NP_181158.1">
    <property type="nucleotide sequence ID" value="NM_129174.4"/>
</dbReference>
<dbReference type="SMR" id="Q9SIH0"/>
<dbReference type="BioGRID" id="3532">
    <property type="interactions" value="106"/>
</dbReference>
<dbReference type="FunCoup" id="Q9SIH0">
    <property type="interactions" value="3030"/>
</dbReference>
<dbReference type="STRING" id="3702.Q9SIH0"/>
<dbReference type="iPTMnet" id="Q9SIH0"/>
<dbReference type="MetOSite" id="Q9SIH0"/>
<dbReference type="PaxDb" id="3702-AT2G36160.1"/>
<dbReference type="ProteomicsDB" id="226907"/>
<dbReference type="EnsemblPlants" id="AT2G36160.1">
    <property type="protein sequence ID" value="AT2G36160.1"/>
    <property type="gene ID" value="AT2G36160"/>
</dbReference>
<dbReference type="GeneID" id="818188"/>
<dbReference type="Gramene" id="AT2G36160.1">
    <property type="protein sequence ID" value="AT2G36160.1"/>
    <property type="gene ID" value="AT2G36160"/>
</dbReference>
<dbReference type="KEGG" id="ath:AT2G36160"/>
<dbReference type="Araport" id="AT2G36160"/>
<dbReference type="TAIR" id="AT2G36160"/>
<dbReference type="eggNOG" id="KOG0407">
    <property type="taxonomic scope" value="Eukaryota"/>
</dbReference>
<dbReference type="HOGENOM" id="CLU_072439_6_0_1"/>
<dbReference type="InParanoid" id="Q9SIH0"/>
<dbReference type="OMA" id="ETICHES"/>
<dbReference type="OrthoDB" id="1089874at2759"/>
<dbReference type="PhylomeDB" id="Q9SIH0"/>
<dbReference type="CD-CODE" id="4299E36E">
    <property type="entry name" value="Nucleolus"/>
</dbReference>
<dbReference type="PRO" id="PR:Q9SIH0"/>
<dbReference type="Proteomes" id="UP000006548">
    <property type="component" value="Chromosome 2"/>
</dbReference>
<dbReference type="ExpressionAtlas" id="Q9SIH0">
    <property type="expression patterns" value="baseline and differential"/>
</dbReference>
<dbReference type="GO" id="GO:0022626">
    <property type="term" value="C:cytosolic ribosome"/>
    <property type="evidence" value="ECO:0007005"/>
    <property type="project" value="TAIR"/>
</dbReference>
<dbReference type="GO" id="GO:0022627">
    <property type="term" value="C:cytosolic small ribosomal subunit"/>
    <property type="evidence" value="ECO:0007005"/>
    <property type="project" value="TAIR"/>
</dbReference>
<dbReference type="GO" id="GO:0005783">
    <property type="term" value="C:endoplasmic reticulum"/>
    <property type="evidence" value="ECO:0007005"/>
    <property type="project" value="TAIR"/>
</dbReference>
<dbReference type="GO" id="GO:0000325">
    <property type="term" value="C:plant-type vacuole"/>
    <property type="evidence" value="ECO:0007005"/>
    <property type="project" value="TAIR"/>
</dbReference>
<dbReference type="GO" id="GO:0009506">
    <property type="term" value="C:plasmodesma"/>
    <property type="evidence" value="ECO:0007005"/>
    <property type="project" value="TAIR"/>
</dbReference>
<dbReference type="GO" id="GO:0003729">
    <property type="term" value="F:mRNA binding"/>
    <property type="evidence" value="ECO:0000314"/>
    <property type="project" value="TAIR"/>
</dbReference>
<dbReference type="GO" id="GO:0003735">
    <property type="term" value="F:structural constituent of ribosome"/>
    <property type="evidence" value="ECO:0000314"/>
    <property type="project" value="CAFA"/>
</dbReference>
<dbReference type="GO" id="GO:0006412">
    <property type="term" value="P:translation"/>
    <property type="evidence" value="ECO:0007669"/>
    <property type="project" value="InterPro"/>
</dbReference>
<dbReference type="FunFam" id="3.30.420.80:FF:000002">
    <property type="entry name" value="40S ribosomal protein S14"/>
    <property type="match status" value="1"/>
</dbReference>
<dbReference type="Gene3D" id="3.30.420.80">
    <property type="entry name" value="Ribosomal protein S11"/>
    <property type="match status" value="1"/>
</dbReference>
<dbReference type="HAMAP" id="MF_01310">
    <property type="entry name" value="Ribosomal_uS11"/>
    <property type="match status" value="1"/>
</dbReference>
<dbReference type="InterPro" id="IPR001971">
    <property type="entry name" value="Ribosomal_uS11"/>
</dbReference>
<dbReference type="InterPro" id="IPR018102">
    <property type="entry name" value="Ribosomal_uS11_CS"/>
</dbReference>
<dbReference type="InterPro" id="IPR036967">
    <property type="entry name" value="Ribosomal_uS11_sf"/>
</dbReference>
<dbReference type="NCBIfam" id="NF007176">
    <property type="entry name" value="PRK09607.1"/>
    <property type="match status" value="1"/>
</dbReference>
<dbReference type="PANTHER" id="PTHR11759">
    <property type="entry name" value="40S RIBOSOMAL PROTEIN S14/30S RIBOSOMAL PROTEIN S11"/>
    <property type="match status" value="1"/>
</dbReference>
<dbReference type="Pfam" id="PF00411">
    <property type="entry name" value="Ribosomal_S11"/>
    <property type="match status" value="1"/>
</dbReference>
<dbReference type="PIRSF" id="PIRSF002131">
    <property type="entry name" value="Ribosomal_S11"/>
    <property type="match status" value="1"/>
</dbReference>
<dbReference type="SUPFAM" id="SSF53137">
    <property type="entry name" value="Translational machinery components"/>
    <property type="match status" value="1"/>
</dbReference>
<dbReference type="PROSITE" id="PS00054">
    <property type="entry name" value="RIBOSOMAL_S11"/>
    <property type="match status" value="1"/>
</dbReference>
<gene>
    <name type="primary">RPS14A</name>
    <name type="ordered locus">At2g36160</name>
    <name type="ORF">F9C22.9</name>
</gene>
<organism>
    <name type="scientific">Arabidopsis thaliana</name>
    <name type="common">Mouse-ear cress</name>
    <dbReference type="NCBI Taxonomy" id="3702"/>
    <lineage>
        <taxon>Eukaryota</taxon>
        <taxon>Viridiplantae</taxon>
        <taxon>Streptophyta</taxon>
        <taxon>Embryophyta</taxon>
        <taxon>Tracheophyta</taxon>
        <taxon>Spermatophyta</taxon>
        <taxon>Magnoliopsida</taxon>
        <taxon>eudicotyledons</taxon>
        <taxon>Gunneridae</taxon>
        <taxon>Pentapetalae</taxon>
        <taxon>rosids</taxon>
        <taxon>malvids</taxon>
        <taxon>Brassicales</taxon>
        <taxon>Brassicaceae</taxon>
        <taxon>Camelineae</taxon>
        <taxon>Arabidopsis</taxon>
    </lineage>
</organism>
<proteinExistence type="evidence at protein level"/>
<name>RS141_ARATH</name>
<sequence>MSKRKTKEPKVDVVTLGPSVREGEQVFGVVHIFASFNDTFIHVTDLSGRETLVRITGGMKVKADRDESSPYAAMLAAQDVAQRCKELGITAMHVKLRATGGNKTKTPGPGAQSALRALARSGMKIGRIEDVTPIPTDSTRRKGGRRGRRL</sequence>
<comment type="subunit">
    <text evidence="2">Interacts with AAK6.</text>
</comment>
<comment type="subcellular location">
    <subcellularLocation>
        <location>Cytoplasm</location>
    </subcellularLocation>
</comment>
<comment type="similarity">
    <text evidence="4">Belongs to the universal ribosomal protein uS11 family.</text>
</comment>
<evidence type="ECO:0000250" key="1">
    <source>
        <dbReference type="UniProtKB" id="Q9CAX6"/>
    </source>
</evidence>
<evidence type="ECO:0000269" key="2">
    <source>
    </source>
</evidence>
<evidence type="ECO:0000303" key="3">
    <source>
    </source>
</evidence>
<evidence type="ECO:0000305" key="4"/>
<feature type="chain" id="PRO_0000123344" description="Small ribosomal subunit protein uS11z">
    <location>
        <begin position="1"/>
        <end position="150"/>
    </location>
</feature>
<feature type="modified residue" description="Phosphoserine" evidence="1">
    <location>
        <position position="19"/>
    </location>
</feature>